<keyword id="KW-1185">Reference proteome</keyword>
<keyword id="KW-0833">Ubl conjugation pathway</keyword>
<organism>
    <name type="scientific">Talaromyces marneffei (strain ATCC 18224 / CBS 334.59 / QM 7333)</name>
    <name type="common">Penicillium marneffei</name>
    <dbReference type="NCBI Taxonomy" id="441960"/>
    <lineage>
        <taxon>Eukaryota</taxon>
        <taxon>Fungi</taxon>
        <taxon>Dikarya</taxon>
        <taxon>Ascomycota</taxon>
        <taxon>Pezizomycotina</taxon>
        <taxon>Eurotiomycetes</taxon>
        <taxon>Eurotiomycetidae</taxon>
        <taxon>Eurotiales</taxon>
        <taxon>Trichocomaceae</taxon>
        <taxon>Talaromyces</taxon>
        <taxon>Talaromyces sect. Talaromyces</taxon>
    </lineage>
</organism>
<sequence length="160" mass="18509">MSGQVTLQSSDSVDITVERAVAERSMLIKNLLEDLGESEEPVPIPNVNESVLKKVIEWCTHHKNDPQSTGEDDDNRRRTTEIDEWDQKFMQVDQEMLFEIILAANYLDIKALLDVGCKTVANMIKGKSPEEIRKTFNIQNDFTPEEEDQIRRENEWAEDR</sequence>
<protein>
    <recommendedName>
        <fullName>E3 ubiquitin ligase complex SCF subunit sconC</fullName>
    </recommendedName>
    <alternativeName>
        <fullName>Sulfur controller C</fullName>
    </alternativeName>
    <alternativeName>
        <fullName>Sulfur metabolite repression control protein C</fullName>
    </alternativeName>
</protein>
<accession>B6QGB9</accession>
<proteinExistence type="inferred from homology"/>
<name>SKP1_TALMQ</name>
<reference key="1">
    <citation type="journal article" date="2015" name="Genome Announc.">
        <title>Genome sequence of the AIDS-associated pathogen Penicillium marneffei (ATCC18224) and its near taxonomic relative Talaromyces stipitatus (ATCC10500).</title>
        <authorList>
            <person name="Nierman W.C."/>
            <person name="Fedorova-Abrams N.D."/>
            <person name="Andrianopoulos A."/>
        </authorList>
    </citation>
    <scope>NUCLEOTIDE SEQUENCE [LARGE SCALE GENOMIC DNA]</scope>
    <source>
        <strain>ATCC 18224 / CBS 334.59 / QM 7333</strain>
    </source>
</reference>
<dbReference type="EMBL" id="DS995901">
    <property type="protein sequence ID" value="EEA24504.1"/>
    <property type="molecule type" value="Genomic_DNA"/>
</dbReference>
<dbReference type="EMBL" id="DS995901">
    <property type="protein sequence ID" value="EEA24505.1"/>
    <property type="molecule type" value="Genomic_DNA"/>
</dbReference>
<dbReference type="RefSeq" id="XP_002148015.1">
    <property type="nucleotide sequence ID" value="XM_002147979.1"/>
</dbReference>
<dbReference type="RefSeq" id="XP_002148016.1">
    <property type="nucleotide sequence ID" value="XM_002147980.1"/>
</dbReference>
<dbReference type="SMR" id="B6QGB9"/>
<dbReference type="STRING" id="441960.B6QGB9"/>
<dbReference type="VEuPathDB" id="FungiDB:PMAA_085020"/>
<dbReference type="HOGENOM" id="CLU_059252_4_0_1"/>
<dbReference type="OrthoDB" id="2087at28568"/>
<dbReference type="PhylomeDB" id="B6QGB9"/>
<dbReference type="UniPathway" id="UPA00143"/>
<dbReference type="Proteomes" id="UP000001294">
    <property type="component" value="Unassembled WGS sequence"/>
</dbReference>
<dbReference type="GO" id="GO:0016567">
    <property type="term" value="P:protein ubiquitination"/>
    <property type="evidence" value="ECO:0007669"/>
    <property type="project" value="UniProtKB-UniPathway"/>
</dbReference>
<dbReference type="GO" id="GO:0006511">
    <property type="term" value="P:ubiquitin-dependent protein catabolic process"/>
    <property type="evidence" value="ECO:0007669"/>
    <property type="project" value="InterPro"/>
</dbReference>
<dbReference type="CDD" id="cd18322">
    <property type="entry name" value="BTB_POZ_SKP1"/>
    <property type="match status" value="1"/>
</dbReference>
<dbReference type="FunFam" id="3.30.710.10:FF:000026">
    <property type="entry name" value="E3 ubiquitin ligase complex SCF subunit"/>
    <property type="match status" value="1"/>
</dbReference>
<dbReference type="Gene3D" id="3.30.710.10">
    <property type="entry name" value="Potassium Channel Kv1.1, Chain A"/>
    <property type="match status" value="1"/>
</dbReference>
<dbReference type="InterPro" id="IPR016897">
    <property type="entry name" value="SKP1"/>
</dbReference>
<dbReference type="InterPro" id="IPR001232">
    <property type="entry name" value="SKP1-like"/>
</dbReference>
<dbReference type="InterPro" id="IPR036296">
    <property type="entry name" value="SKP1-like_dim_sf"/>
</dbReference>
<dbReference type="InterPro" id="IPR011333">
    <property type="entry name" value="SKP1/BTB/POZ_sf"/>
</dbReference>
<dbReference type="InterPro" id="IPR016072">
    <property type="entry name" value="Skp1_comp_dimer"/>
</dbReference>
<dbReference type="InterPro" id="IPR016073">
    <property type="entry name" value="Skp1_comp_POZ"/>
</dbReference>
<dbReference type="PANTHER" id="PTHR11165">
    <property type="entry name" value="SKP1"/>
    <property type="match status" value="1"/>
</dbReference>
<dbReference type="Pfam" id="PF01466">
    <property type="entry name" value="Skp1"/>
    <property type="match status" value="1"/>
</dbReference>
<dbReference type="Pfam" id="PF03931">
    <property type="entry name" value="Skp1_POZ"/>
    <property type="match status" value="1"/>
</dbReference>
<dbReference type="PIRSF" id="PIRSF028729">
    <property type="entry name" value="E3_ubiquit_lig_SCF_Skp"/>
    <property type="match status" value="1"/>
</dbReference>
<dbReference type="SMART" id="SM00512">
    <property type="entry name" value="Skp1"/>
    <property type="match status" value="1"/>
</dbReference>
<dbReference type="SUPFAM" id="SSF54695">
    <property type="entry name" value="POZ domain"/>
    <property type="match status" value="1"/>
</dbReference>
<dbReference type="SUPFAM" id="SSF81382">
    <property type="entry name" value="Skp1 dimerisation domain-like"/>
    <property type="match status" value="1"/>
</dbReference>
<feature type="chain" id="PRO_0000397270" description="E3 ubiquitin ligase complex SCF subunit sconC">
    <location>
        <begin position="1"/>
        <end position="160"/>
    </location>
</feature>
<feature type="region of interest" description="Interaction with the F-box domain of F-box proteins" evidence="1">
    <location>
        <begin position="101"/>
        <end position="160"/>
    </location>
</feature>
<gene>
    <name type="primary">sconC</name>
    <name type="synonym">skpA</name>
    <name type="ORF">PMAA_085020</name>
</gene>
<comment type="function">
    <text evidence="1">Essential component of the SCF (SKP1-CUL1-F-box protein) E3 ubiquitin ligase complexes, which mediate the ubiquitination and subsequent proteasomal degradation of target proteins. Controls sulfur metabolite repression, probably by mediating the inactivation or degradation of the metR transcription factor (By similarity).</text>
</comment>
<comment type="pathway">
    <text>Protein modification; protein ubiquitination.</text>
</comment>
<comment type="subunit">
    <text evidence="1">Component of the SCF (SKP1-CUL1-F-box protein) E3 ubiquitin ligase complexes.</text>
</comment>
<comment type="similarity">
    <text evidence="2">Belongs to the SKP1 family.</text>
</comment>
<evidence type="ECO:0000250" key="1"/>
<evidence type="ECO:0000305" key="2"/>